<gene>
    <name evidence="1" type="primary">rsfS</name>
    <name type="ordered locus">HI_0034</name>
</gene>
<comment type="function">
    <text evidence="1">Functions as a ribosomal silencing factor. Interacts with ribosomal protein uL14 (rplN), blocking formation of intersubunit bridge B8. Prevents association of the 30S and 50S ribosomal subunits and the formation of functional ribosomes, thus repressing translation.</text>
</comment>
<comment type="subunit">
    <text evidence="1">Interacts with ribosomal protein uL14 (rplN).</text>
</comment>
<comment type="subcellular location">
    <subcellularLocation>
        <location evidence="1">Cytoplasm</location>
    </subcellularLocation>
</comment>
<comment type="similarity">
    <text evidence="1">Belongs to the Iojap/RsfS family.</text>
</comment>
<organism>
    <name type="scientific">Haemophilus influenzae (strain ATCC 51907 / DSM 11121 / KW20 / Rd)</name>
    <dbReference type="NCBI Taxonomy" id="71421"/>
    <lineage>
        <taxon>Bacteria</taxon>
        <taxon>Pseudomonadati</taxon>
        <taxon>Pseudomonadota</taxon>
        <taxon>Gammaproteobacteria</taxon>
        <taxon>Pasteurellales</taxon>
        <taxon>Pasteurellaceae</taxon>
        <taxon>Haemophilus</taxon>
    </lineage>
</organism>
<protein>
    <recommendedName>
        <fullName evidence="1">Ribosomal silencing factor RsfS</fullName>
    </recommendedName>
</protein>
<sequence length="102" mass="11386">MALVEFLMETLDGLKGTDIVHFDVRGKSSITDNMIICTGTSSRQVSAMADNLITECKKAGFETFGEEGKNTADWIVVDLGQAIVHIMQRDAREMYQLEKLWA</sequence>
<proteinExistence type="inferred from homology"/>
<dbReference type="EMBL" id="L42023">
    <property type="protein sequence ID" value="AAC21712.1"/>
    <property type="molecule type" value="Genomic_DNA"/>
</dbReference>
<dbReference type="PIR" id="H64140">
    <property type="entry name" value="H64140"/>
</dbReference>
<dbReference type="RefSeq" id="NP_438207.1">
    <property type="nucleotide sequence ID" value="NC_000907.1"/>
</dbReference>
<dbReference type="SMR" id="P44471"/>
<dbReference type="STRING" id="71421.HI_0034"/>
<dbReference type="EnsemblBacteria" id="AAC21712">
    <property type="protein sequence ID" value="AAC21712"/>
    <property type="gene ID" value="HI_0034"/>
</dbReference>
<dbReference type="KEGG" id="hin:HI_0034"/>
<dbReference type="PATRIC" id="fig|71421.8.peg.34"/>
<dbReference type="eggNOG" id="COG0799">
    <property type="taxonomic scope" value="Bacteria"/>
</dbReference>
<dbReference type="HOGENOM" id="CLU_092688_6_1_6"/>
<dbReference type="OrthoDB" id="9793681at2"/>
<dbReference type="PhylomeDB" id="P44471"/>
<dbReference type="BioCyc" id="HINF71421:G1GJ1-34-MONOMER"/>
<dbReference type="Proteomes" id="UP000000579">
    <property type="component" value="Chromosome"/>
</dbReference>
<dbReference type="GO" id="GO:0005737">
    <property type="term" value="C:cytoplasm"/>
    <property type="evidence" value="ECO:0007669"/>
    <property type="project" value="UniProtKB-SubCell"/>
</dbReference>
<dbReference type="GO" id="GO:0043023">
    <property type="term" value="F:ribosomal large subunit binding"/>
    <property type="evidence" value="ECO:0000318"/>
    <property type="project" value="GO_Central"/>
</dbReference>
<dbReference type="GO" id="GO:0042256">
    <property type="term" value="P:cytosolic ribosome assembly"/>
    <property type="evidence" value="ECO:0007669"/>
    <property type="project" value="UniProtKB-UniRule"/>
</dbReference>
<dbReference type="GO" id="GO:0090071">
    <property type="term" value="P:negative regulation of ribosome biogenesis"/>
    <property type="evidence" value="ECO:0000318"/>
    <property type="project" value="GO_Central"/>
</dbReference>
<dbReference type="GO" id="GO:0017148">
    <property type="term" value="P:negative regulation of translation"/>
    <property type="evidence" value="ECO:0000318"/>
    <property type="project" value="GO_Central"/>
</dbReference>
<dbReference type="FunFam" id="3.30.460.10:FF:000075">
    <property type="entry name" value="Ribosomal silencing factor RsfS"/>
    <property type="match status" value="1"/>
</dbReference>
<dbReference type="Gene3D" id="3.30.460.10">
    <property type="entry name" value="Beta Polymerase, domain 2"/>
    <property type="match status" value="1"/>
</dbReference>
<dbReference type="HAMAP" id="MF_01477">
    <property type="entry name" value="Iojap_RsfS"/>
    <property type="match status" value="1"/>
</dbReference>
<dbReference type="InterPro" id="IPR004394">
    <property type="entry name" value="Iojap/RsfS/C7orf30"/>
</dbReference>
<dbReference type="InterPro" id="IPR043519">
    <property type="entry name" value="NT_sf"/>
</dbReference>
<dbReference type="NCBIfam" id="TIGR00090">
    <property type="entry name" value="rsfS_iojap_ybeB"/>
    <property type="match status" value="1"/>
</dbReference>
<dbReference type="PANTHER" id="PTHR21043">
    <property type="entry name" value="IOJAP SUPERFAMILY ORTHOLOG"/>
    <property type="match status" value="1"/>
</dbReference>
<dbReference type="PANTHER" id="PTHR21043:SF0">
    <property type="entry name" value="MITOCHONDRIAL ASSEMBLY OF RIBOSOMAL LARGE SUBUNIT PROTEIN 1"/>
    <property type="match status" value="1"/>
</dbReference>
<dbReference type="Pfam" id="PF02410">
    <property type="entry name" value="RsfS"/>
    <property type="match status" value="1"/>
</dbReference>
<dbReference type="SUPFAM" id="SSF81301">
    <property type="entry name" value="Nucleotidyltransferase"/>
    <property type="match status" value="1"/>
</dbReference>
<name>IOJAP_HAEIN</name>
<evidence type="ECO:0000255" key="1">
    <source>
        <dbReference type="HAMAP-Rule" id="MF_01477"/>
    </source>
</evidence>
<feature type="chain" id="PRO_0000168677" description="Ribosomal silencing factor RsfS">
    <location>
        <begin position="1"/>
        <end position="102"/>
    </location>
</feature>
<reference key="1">
    <citation type="journal article" date="1995" name="Science">
        <title>Whole-genome random sequencing and assembly of Haemophilus influenzae Rd.</title>
        <authorList>
            <person name="Fleischmann R.D."/>
            <person name="Adams M.D."/>
            <person name="White O."/>
            <person name="Clayton R.A."/>
            <person name="Kirkness E.F."/>
            <person name="Kerlavage A.R."/>
            <person name="Bult C.J."/>
            <person name="Tomb J.-F."/>
            <person name="Dougherty B.A."/>
            <person name="Merrick J.M."/>
            <person name="McKenney K."/>
            <person name="Sutton G.G."/>
            <person name="FitzHugh W."/>
            <person name="Fields C.A."/>
            <person name="Gocayne J.D."/>
            <person name="Scott J.D."/>
            <person name="Shirley R."/>
            <person name="Liu L.-I."/>
            <person name="Glodek A."/>
            <person name="Kelley J.M."/>
            <person name="Weidman J.F."/>
            <person name="Phillips C.A."/>
            <person name="Spriggs T."/>
            <person name="Hedblom E."/>
            <person name="Cotton M.D."/>
            <person name="Utterback T.R."/>
            <person name="Hanna M.C."/>
            <person name="Nguyen D.T."/>
            <person name="Saudek D.M."/>
            <person name="Brandon R.C."/>
            <person name="Fine L.D."/>
            <person name="Fritchman J.L."/>
            <person name="Fuhrmann J.L."/>
            <person name="Geoghagen N.S.M."/>
            <person name="Gnehm C.L."/>
            <person name="McDonald L.A."/>
            <person name="Small K.V."/>
            <person name="Fraser C.M."/>
            <person name="Smith H.O."/>
            <person name="Venter J.C."/>
        </authorList>
    </citation>
    <scope>NUCLEOTIDE SEQUENCE [LARGE SCALE GENOMIC DNA]</scope>
    <source>
        <strain>ATCC 51907 / DSM 11121 / KW20 / Rd</strain>
    </source>
</reference>
<accession>P44471</accession>
<keyword id="KW-0963">Cytoplasm</keyword>
<keyword id="KW-1185">Reference proteome</keyword>
<keyword id="KW-0678">Repressor</keyword>
<keyword id="KW-0810">Translation regulation</keyword>